<sequence length="309" mass="34042">MELQFLGTGAGQPSKARNVSSLVLKLLDEINEVWMFDCGEGTQRQILETTIKPRKVKKIFITHMHGDHIFGLPGFLASRSFQSSEEQTDLEVYGPVGIKQYVMTSIRTSGTRLSYHVHFKEIDENSLGLVMEDDKFAVYADKLDHTIFCVGYRVVQKDLEGTLDAEALKAAGVPFGPLFGQIKNGQDVVLEDGTKIIAKDFISAPKKGKVITILGDTRKTNASVRLGLGADVLVHESTYGKGDEKIAKSHGHSTNMQAAQVARDASAKRLLLNHVSARFLGRDIGKMAADAKTIFENTHIVRDLEEVEI</sequence>
<proteinExistence type="inferred from homology"/>
<dbReference type="EC" id="3.1.26.11" evidence="1"/>
<dbReference type="EMBL" id="CP000419">
    <property type="protein sequence ID" value="ABJ66383.1"/>
    <property type="molecule type" value="Genomic_DNA"/>
</dbReference>
<dbReference type="RefSeq" id="WP_011226135.1">
    <property type="nucleotide sequence ID" value="NZ_CP086001.1"/>
</dbReference>
<dbReference type="SMR" id="Q03K89"/>
<dbReference type="GeneID" id="66899018"/>
<dbReference type="KEGG" id="ste:STER_1193"/>
<dbReference type="HOGENOM" id="CLU_031317_2_0_9"/>
<dbReference type="GO" id="GO:0042781">
    <property type="term" value="F:3'-tRNA processing endoribonuclease activity"/>
    <property type="evidence" value="ECO:0007669"/>
    <property type="project" value="UniProtKB-UniRule"/>
</dbReference>
<dbReference type="GO" id="GO:0008270">
    <property type="term" value="F:zinc ion binding"/>
    <property type="evidence" value="ECO:0007669"/>
    <property type="project" value="UniProtKB-UniRule"/>
</dbReference>
<dbReference type="CDD" id="cd07717">
    <property type="entry name" value="RNaseZ_ZiPD-like_MBL-fold"/>
    <property type="match status" value="1"/>
</dbReference>
<dbReference type="FunFam" id="3.60.15.10:FF:000002">
    <property type="entry name" value="Ribonuclease Z"/>
    <property type="match status" value="1"/>
</dbReference>
<dbReference type="Gene3D" id="3.60.15.10">
    <property type="entry name" value="Ribonuclease Z/Hydroxyacylglutathione hydrolase-like"/>
    <property type="match status" value="1"/>
</dbReference>
<dbReference type="HAMAP" id="MF_01818">
    <property type="entry name" value="RNase_Z_BN"/>
    <property type="match status" value="1"/>
</dbReference>
<dbReference type="InterPro" id="IPR001279">
    <property type="entry name" value="Metallo-B-lactamas"/>
</dbReference>
<dbReference type="InterPro" id="IPR036866">
    <property type="entry name" value="RibonucZ/Hydroxyglut_hydro"/>
</dbReference>
<dbReference type="InterPro" id="IPR013471">
    <property type="entry name" value="RNase_Z/BN"/>
</dbReference>
<dbReference type="NCBIfam" id="NF000801">
    <property type="entry name" value="PRK00055.1-3"/>
    <property type="match status" value="1"/>
</dbReference>
<dbReference type="NCBIfam" id="TIGR02651">
    <property type="entry name" value="RNase_Z"/>
    <property type="match status" value="1"/>
</dbReference>
<dbReference type="PANTHER" id="PTHR46018">
    <property type="entry name" value="ZINC PHOSPHODIESTERASE ELAC PROTEIN 1"/>
    <property type="match status" value="1"/>
</dbReference>
<dbReference type="PANTHER" id="PTHR46018:SF2">
    <property type="entry name" value="ZINC PHOSPHODIESTERASE ELAC PROTEIN 1"/>
    <property type="match status" value="1"/>
</dbReference>
<dbReference type="Pfam" id="PF00753">
    <property type="entry name" value="Lactamase_B"/>
    <property type="match status" value="1"/>
</dbReference>
<dbReference type="SUPFAM" id="SSF56281">
    <property type="entry name" value="Metallo-hydrolase/oxidoreductase"/>
    <property type="match status" value="1"/>
</dbReference>
<reference key="1">
    <citation type="journal article" date="2006" name="Proc. Natl. Acad. Sci. U.S.A.">
        <title>Comparative genomics of the lactic acid bacteria.</title>
        <authorList>
            <person name="Makarova K.S."/>
            <person name="Slesarev A."/>
            <person name="Wolf Y.I."/>
            <person name="Sorokin A."/>
            <person name="Mirkin B."/>
            <person name="Koonin E.V."/>
            <person name="Pavlov A."/>
            <person name="Pavlova N."/>
            <person name="Karamychev V."/>
            <person name="Polouchine N."/>
            <person name="Shakhova V."/>
            <person name="Grigoriev I."/>
            <person name="Lou Y."/>
            <person name="Rohksar D."/>
            <person name="Lucas S."/>
            <person name="Huang K."/>
            <person name="Goodstein D.M."/>
            <person name="Hawkins T."/>
            <person name="Plengvidhya V."/>
            <person name="Welker D."/>
            <person name="Hughes J."/>
            <person name="Goh Y."/>
            <person name="Benson A."/>
            <person name="Baldwin K."/>
            <person name="Lee J.-H."/>
            <person name="Diaz-Muniz I."/>
            <person name="Dosti B."/>
            <person name="Smeianov V."/>
            <person name="Wechter W."/>
            <person name="Barabote R."/>
            <person name="Lorca G."/>
            <person name="Altermann E."/>
            <person name="Barrangou R."/>
            <person name="Ganesan B."/>
            <person name="Xie Y."/>
            <person name="Rawsthorne H."/>
            <person name="Tamir D."/>
            <person name="Parker C."/>
            <person name="Breidt F."/>
            <person name="Broadbent J.R."/>
            <person name="Hutkins R."/>
            <person name="O'Sullivan D."/>
            <person name="Steele J."/>
            <person name="Unlu G."/>
            <person name="Saier M.H. Jr."/>
            <person name="Klaenhammer T."/>
            <person name="Richardson P."/>
            <person name="Kozyavkin S."/>
            <person name="Weimer B.C."/>
            <person name="Mills D.A."/>
        </authorList>
    </citation>
    <scope>NUCLEOTIDE SEQUENCE [LARGE SCALE GENOMIC DNA]</scope>
    <source>
        <strain>ATCC BAA-491 / LMD-9</strain>
    </source>
</reference>
<feature type="chain" id="PRO_1000070344" description="Ribonuclease Z">
    <location>
        <begin position="1"/>
        <end position="309"/>
    </location>
</feature>
<feature type="active site" description="Proton acceptor" evidence="1">
    <location>
        <position position="67"/>
    </location>
</feature>
<feature type="binding site" evidence="1">
    <location>
        <position position="63"/>
    </location>
    <ligand>
        <name>Zn(2+)</name>
        <dbReference type="ChEBI" id="CHEBI:29105"/>
        <label>1</label>
        <note>catalytic</note>
    </ligand>
</feature>
<feature type="binding site" evidence="1">
    <location>
        <position position="65"/>
    </location>
    <ligand>
        <name>Zn(2+)</name>
        <dbReference type="ChEBI" id="CHEBI:29105"/>
        <label>1</label>
        <note>catalytic</note>
    </ligand>
</feature>
<feature type="binding site" evidence="1">
    <location>
        <position position="67"/>
    </location>
    <ligand>
        <name>Zn(2+)</name>
        <dbReference type="ChEBI" id="CHEBI:29105"/>
        <label>2</label>
        <note>catalytic</note>
    </ligand>
</feature>
<feature type="binding site" evidence="1">
    <location>
        <position position="68"/>
    </location>
    <ligand>
        <name>Zn(2+)</name>
        <dbReference type="ChEBI" id="CHEBI:29105"/>
        <label>2</label>
        <note>catalytic</note>
    </ligand>
</feature>
<feature type="binding site" evidence="1">
    <location>
        <position position="145"/>
    </location>
    <ligand>
        <name>Zn(2+)</name>
        <dbReference type="ChEBI" id="CHEBI:29105"/>
        <label>1</label>
        <note>catalytic</note>
    </ligand>
</feature>
<feature type="binding site" evidence="1">
    <location>
        <position position="216"/>
    </location>
    <ligand>
        <name>Zn(2+)</name>
        <dbReference type="ChEBI" id="CHEBI:29105"/>
        <label>1</label>
        <note>catalytic</note>
    </ligand>
</feature>
<feature type="binding site" evidence="1">
    <location>
        <position position="216"/>
    </location>
    <ligand>
        <name>Zn(2+)</name>
        <dbReference type="ChEBI" id="CHEBI:29105"/>
        <label>2</label>
        <note>catalytic</note>
    </ligand>
</feature>
<feature type="binding site" evidence="1">
    <location>
        <position position="274"/>
    </location>
    <ligand>
        <name>Zn(2+)</name>
        <dbReference type="ChEBI" id="CHEBI:29105"/>
        <label>2</label>
        <note>catalytic</note>
    </ligand>
</feature>
<protein>
    <recommendedName>
        <fullName evidence="1">Ribonuclease Z</fullName>
        <shortName evidence="1">RNase Z</shortName>
        <ecNumber evidence="1">3.1.26.11</ecNumber>
    </recommendedName>
    <alternativeName>
        <fullName evidence="1">tRNA 3 endonuclease</fullName>
    </alternativeName>
    <alternativeName>
        <fullName evidence="1">tRNase Z</fullName>
    </alternativeName>
</protein>
<name>RNZ_STRTD</name>
<accession>Q03K89</accession>
<organism>
    <name type="scientific">Streptococcus thermophilus (strain ATCC BAA-491 / LMD-9)</name>
    <dbReference type="NCBI Taxonomy" id="322159"/>
    <lineage>
        <taxon>Bacteria</taxon>
        <taxon>Bacillati</taxon>
        <taxon>Bacillota</taxon>
        <taxon>Bacilli</taxon>
        <taxon>Lactobacillales</taxon>
        <taxon>Streptococcaceae</taxon>
        <taxon>Streptococcus</taxon>
    </lineage>
</organism>
<comment type="function">
    <text evidence="1">Zinc phosphodiesterase, which displays some tRNA 3'-processing endonuclease activity. Probably involved in tRNA maturation, by removing a 3'-trailer from precursor tRNA.</text>
</comment>
<comment type="catalytic activity">
    <reaction evidence="1">
        <text>Endonucleolytic cleavage of RNA, removing extra 3' nucleotides from tRNA precursor, generating 3' termini of tRNAs. A 3'-hydroxy group is left at the tRNA terminus and a 5'-phosphoryl group is left at the trailer molecule.</text>
        <dbReference type="EC" id="3.1.26.11"/>
    </reaction>
</comment>
<comment type="cofactor">
    <cofactor evidence="1">
        <name>Zn(2+)</name>
        <dbReference type="ChEBI" id="CHEBI:29105"/>
    </cofactor>
    <text evidence="1">Binds 2 Zn(2+) ions.</text>
</comment>
<comment type="subunit">
    <text evidence="1">Homodimer.</text>
</comment>
<comment type="similarity">
    <text evidence="1">Belongs to the RNase Z family.</text>
</comment>
<gene>
    <name evidence="1" type="primary">rnz</name>
    <name type="ordered locus">STER_1193</name>
</gene>
<keyword id="KW-0255">Endonuclease</keyword>
<keyword id="KW-0378">Hydrolase</keyword>
<keyword id="KW-0479">Metal-binding</keyword>
<keyword id="KW-0540">Nuclease</keyword>
<keyword id="KW-0819">tRNA processing</keyword>
<keyword id="KW-0862">Zinc</keyword>
<evidence type="ECO:0000255" key="1">
    <source>
        <dbReference type="HAMAP-Rule" id="MF_01818"/>
    </source>
</evidence>